<accession>P09182</accession>
<feature type="chain" id="PRO_0000218698" description="Colicin-N immunity protein">
    <location>
        <begin position="1"/>
        <end position="131"/>
    </location>
</feature>
<feature type="transmembrane region" description="Helical" evidence="1">
    <location>
        <begin position="66"/>
        <end position="84"/>
    </location>
</feature>
<feature type="transmembrane region" description="Helical" evidence="1">
    <location>
        <begin position="104"/>
        <end position="124"/>
    </location>
</feature>
<proteinExistence type="predicted"/>
<keyword id="KW-0079">Bacteriocin immunity</keyword>
<keyword id="KW-1003">Cell membrane</keyword>
<keyword id="KW-0472">Membrane</keyword>
<keyword id="KW-0614">Plasmid</keyword>
<keyword id="KW-0812">Transmembrane</keyword>
<keyword id="KW-1133">Transmembrane helix</keyword>
<sequence length="131" mass="15245">MHNTLLEKIIAYLSLPGFHSLNNPPLSEAFNLYVHTAPLAATSLFIFTHKELELKPKSSPLRALKILTPFTILYISMIYCFLLTDTELTLSSKTFVLIVKKRSVFVFFLYNTIYWDIYIHIFVLLVPYRNI</sequence>
<evidence type="ECO:0000255" key="1"/>
<evidence type="ECO:0000305" key="2"/>
<dbReference type="EMBL" id="X06933">
    <property type="protein sequence ID" value="CAA30020.1"/>
    <property type="molecule type" value="Genomic_DNA"/>
</dbReference>
<dbReference type="PIR" id="S01761">
    <property type="entry name" value="IMECN4"/>
</dbReference>
<dbReference type="SMR" id="P09182"/>
<dbReference type="TCDB" id="8.B.24.1.2">
    <property type="family name" value="the colicin immunity protein (colip) functional family"/>
</dbReference>
<dbReference type="GO" id="GO:0005886">
    <property type="term" value="C:plasma membrane"/>
    <property type="evidence" value="ECO:0007669"/>
    <property type="project" value="UniProtKB-SubCell"/>
</dbReference>
<dbReference type="GO" id="GO:0015643">
    <property type="term" value="F:toxic substance binding"/>
    <property type="evidence" value="ECO:0007669"/>
    <property type="project" value="InterPro"/>
</dbReference>
<dbReference type="GO" id="GO:0030153">
    <property type="term" value="P:bacteriocin immunity"/>
    <property type="evidence" value="ECO:0007669"/>
    <property type="project" value="UniProtKB-KW"/>
</dbReference>
<dbReference type="InterPro" id="IPR005557">
    <property type="entry name" value="Colicin_im"/>
</dbReference>
<dbReference type="Pfam" id="PF03857">
    <property type="entry name" value="Colicin_im"/>
    <property type="match status" value="1"/>
</dbReference>
<dbReference type="PIRSF" id="PIRSF003003">
    <property type="entry name" value="Colicin_im"/>
    <property type="match status" value="1"/>
</dbReference>
<geneLocation type="plasmid">
    <name>ColN pCHAP4</name>
</geneLocation>
<name>IMMN_ECOLX</name>
<reference key="1">
    <citation type="journal article" date="1988" name="Mol. Gen. Genet.">
        <title>The immunity and lysis genes of ColN plasmid pCHAP4.</title>
        <authorList>
            <person name="Pugsley A.P."/>
        </authorList>
    </citation>
    <scope>NUCLEOTIDE SEQUENCE [GENOMIC DNA]</scope>
</reference>
<gene>
    <name type="primary">cni</name>
</gene>
<protein>
    <recommendedName>
        <fullName>Colicin-N immunity protein</fullName>
    </recommendedName>
    <alternativeName>
        <fullName>Microcin-N immunity protein</fullName>
    </alternativeName>
</protein>
<organism>
    <name type="scientific">Escherichia coli</name>
    <dbReference type="NCBI Taxonomy" id="562"/>
    <lineage>
        <taxon>Bacteria</taxon>
        <taxon>Pseudomonadati</taxon>
        <taxon>Pseudomonadota</taxon>
        <taxon>Gammaproteobacteria</taxon>
        <taxon>Enterobacterales</taxon>
        <taxon>Enterobacteriaceae</taxon>
        <taxon>Escherichia</taxon>
    </lineage>
</organism>
<comment type="subcellular location">
    <subcellularLocation>
        <location evidence="2">Cell membrane</location>
        <topology evidence="2">Multi-pass membrane protein</topology>
    </subcellularLocation>
</comment>